<reference key="1">
    <citation type="journal article" date="2004" name="Proc. Natl. Acad. Sci. U.S.A.">
        <title>The diploid genome sequence of Candida albicans.</title>
        <authorList>
            <person name="Jones T."/>
            <person name="Federspiel N.A."/>
            <person name="Chibana H."/>
            <person name="Dungan J."/>
            <person name="Kalman S."/>
            <person name="Magee B.B."/>
            <person name="Newport G."/>
            <person name="Thorstenson Y.R."/>
            <person name="Agabian N."/>
            <person name="Magee P.T."/>
            <person name="Davis R.W."/>
            <person name="Scherer S."/>
        </authorList>
    </citation>
    <scope>NUCLEOTIDE SEQUENCE [LARGE SCALE GENOMIC DNA]</scope>
    <source>
        <strain>SC5314 / ATCC MYA-2876</strain>
    </source>
</reference>
<reference key="2">
    <citation type="journal article" date="2007" name="Genome Biol.">
        <title>Assembly of the Candida albicans genome into sixteen supercontigs aligned on the eight chromosomes.</title>
        <authorList>
            <person name="van het Hoog M."/>
            <person name="Rast T.J."/>
            <person name="Martchenko M."/>
            <person name="Grindle S."/>
            <person name="Dignard D."/>
            <person name="Hogues H."/>
            <person name="Cuomo C."/>
            <person name="Berriman M."/>
            <person name="Scherer S."/>
            <person name="Magee B.B."/>
            <person name="Whiteway M."/>
            <person name="Chibana H."/>
            <person name="Nantel A."/>
            <person name="Magee P.T."/>
        </authorList>
    </citation>
    <scope>GENOME REANNOTATION</scope>
    <source>
        <strain>SC5314 / ATCC MYA-2876</strain>
    </source>
</reference>
<reference key="3">
    <citation type="journal article" date="2013" name="Genome Biol.">
        <title>Assembly of a phased diploid Candida albicans genome facilitates allele-specific measurements and provides a simple model for repeat and indel structure.</title>
        <authorList>
            <person name="Muzzey D."/>
            <person name="Schwartz K."/>
            <person name="Weissman J.S."/>
            <person name="Sherlock G."/>
        </authorList>
    </citation>
    <scope>NUCLEOTIDE SEQUENCE [LARGE SCALE GENOMIC DNA]</scope>
    <scope>GENOME REANNOTATION</scope>
    <source>
        <strain>SC5314 / ATCC MYA-2876</strain>
    </source>
</reference>
<feature type="chain" id="PRO_0000226124" description="Leucine carboxyl methyltransferase 1">
    <location>
        <begin position="1"/>
        <end position="367"/>
    </location>
</feature>
<feature type="binding site" evidence="1">
    <location>
        <position position="84"/>
    </location>
    <ligand>
        <name>S-adenosyl-L-methionine</name>
        <dbReference type="ChEBI" id="CHEBI:59789"/>
    </ligand>
</feature>
<feature type="binding site" evidence="1">
    <location>
        <position position="109"/>
    </location>
    <ligand>
        <name>S-adenosyl-L-methionine</name>
        <dbReference type="ChEBI" id="CHEBI:59789"/>
    </ligand>
</feature>
<feature type="binding site" evidence="1">
    <location>
        <position position="132"/>
    </location>
    <ligand>
        <name>S-adenosyl-L-methionine</name>
        <dbReference type="ChEBI" id="CHEBI:59789"/>
    </ligand>
</feature>
<feature type="binding site" evidence="1">
    <location>
        <begin position="187"/>
        <end position="188"/>
    </location>
    <ligand>
        <name>S-adenosyl-L-methionine</name>
        <dbReference type="ChEBI" id="CHEBI:59789"/>
    </ligand>
</feature>
<feature type="binding site" evidence="1">
    <location>
        <position position="212"/>
    </location>
    <ligand>
        <name>S-adenosyl-L-methionine</name>
        <dbReference type="ChEBI" id="CHEBI:59789"/>
    </ligand>
</feature>
<accession>Q5A387</accession>
<accession>A0A1D8PTQ1</accession>
<organism>
    <name type="scientific">Candida albicans (strain SC5314 / ATCC MYA-2876)</name>
    <name type="common">Yeast</name>
    <dbReference type="NCBI Taxonomy" id="237561"/>
    <lineage>
        <taxon>Eukaryota</taxon>
        <taxon>Fungi</taxon>
        <taxon>Dikarya</taxon>
        <taxon>Ascomycota</taxon>
        <taxon>Saccharomycotina</taxon>
        <taxon>Pichiomycetes</taxon>
        <taxon>Debaryomycetaceae</taxon>
        <taxon>Candida/Lodderomyces clade</taxon>
        <taxon>Candida</taxon>
    </lineage>
</organism>
<protein>
    <recommendedName>
        <fullName>Leucine carboxyl methyltransferase 1</fullName>
        <ecNumber>2.1.1.233</ecNumber>
    </recommendedName>
    <alternativeName>
        <fullName>Protein phosphatase methyltransferase 1</fullName>
    </alternativeName>
    <alternativeName>
        <fullName>[Phosphatase 2A protein]-leucine-carboxy methyltransferase 1</fullName>
    </alternativeName>
</protein>
<gene>
    <name type="primary">PPM1</name>
    <name type="ordered locus">CAALFM_CR08170CA</name>
    <name type="ORF">CaO19.13734</name>
    <name type="ORF">CaO19.6377</name>
</gene>
<comment type="function">
    <text evidence="1">Methylates the carboxyl group of the C-terminal leucine residue of protein phosphatase 2A catalytic subunits to form alpha-leucine ester residues.</text>
</comment>
<comment type="catalytic activity">
    <reaction>
        <text>[phosphatase 2A protein]-C-terminal L-leucine + S-adenosyl-L-methionine = [phosphatase 2A protein]-C-terminal L-leucine methyl ester + S-adenosyl-L-homocysteine</text>
        <dbReference type="Rhea" id="RHEA:48544"/>
        <dbReference type="Rhea" id="RHEA-COMP:12134"/>
        <dbReference type="Rhea" id="RHEA-COMP:12135"/>
        <dbReference type="ChEBI" id="CHEBI:57856"/>
        <dbReference type="ChEBI" id="CHEBI:59789"/>
        <dbReference type="ChEBI" id="CHEBI:90516"/>
        <dbReference type="ChEBI" id="CHEBI:90517"/>
        <dbReference type="EC" id="2.1.1.233"/>
    </reaction>
</comment>
<comment type="similarity">
    <text evidence="2">Belongs to the methyltransferase superfamily. LCMT family.</text>
</comment>
<sequence>MLSPQDRQDKLVRATDLDALSCKYSINRNLYLNPPDEFVKDLVESYQRYLQYCVGYTGLSSSRALKGLFQEKKMPIINRGSYLRTRAIDQVVNKFIGEFKDRCQIVSLGSGSDTRAFQIFKSHANVIYHEIDFPESAKVKKLAILQNPVIRELVGTNETSPLINNKEQFESYSSELHTEKYHLHGIDLRTLKKPDSQIKGFQPEVPTLVISECVLCYLSPDEYQRTMNYWTEIADQNYMGFLIYEPMSLNDQFGETMTLNLQSRGLNLQTFSKYPDLISRKKFLEESCHLKNLRLTDMSYIGGYKVRQDGREWIDHKEMGRINKLEMIDEIEEIRLLLEHYCLIYGEYTEEKTLNFKGIDTWSWILS</sequence>
<evidence type="ECO:0000250" key="1"/>
<evidence type="ECO:0000305" key="2"/>
<keyword id="KW-0489">Methyltransferase</keyword>
<keyword id="KW-1185">Reference proteome</keyword>
<keyword id="KW-0949">S-adenosyl-L-methionine</keyword>
<keyword id="KW-0808">Transferase</keyword>
<dbReference type="EC" id="2.1.1.233"/>
<dbReference type="EMBL" id="CP017630">
    <property type="protein sequence ID" value="AOW31501.1"/>
    <property type="molecule type" value="Genomic_DNA"/>
</dbReference>
<dbReference type="RefSeq" id="XP_716217.1">
    <property type="nucleotide sequence ID" value="XM_711124.1"/>
</dbReference>
<dbReference type="SMR" id="Q5A387"/>
<dbReference type="FunCoup" id="Q5A387">
    <property type="interactions" value="565"/>
</dbReference>
<dbReference type="STRING" id="237561.Q5A387"/>
<dbReference type="EnsemblFungi" id="CR_08170C_A-T">
    <property type="protein sequence ID" value="CR_08170C_A-T-p1"/>
    <property type="gene ID" value="CR_08170C_A"/>
</dbReference>
<dbReference type="GeneID" id="3642073"/>
<dbReference type="KEGG" id="cal:CAALFM_CR08170CA"/>
<dbReference type="CGD" id="CAL0000196930">
    <property type="gene designation" value="orf19.13734"/>
</dbReference>
<dbReference type="VEuPathDB" id="FungiDB:CR_08170C_A"/>
<dbReference type="eggNOG" id="KOG2918">
    <property type="taxonomic scope" value="Eukaryota"/>
</dbReference>
<dbReference type="HOGENOM" id="CLU_031312_1_1_1"/>
<dbReference type="InParanoid" id="Q5A387"/>
<dbReference type="OMA" id="IIYEPIR"/>
<dbReference type="OrthoDB" id="203237at2759"/>
<dbReference type="PRO" id="PR:Q5A387"/>
<dbReference type="Proteomes" id="UP000000559">
    <property type="component" value="Chromosome R"/>
</dbReference>
<dbReference type="GO" id="GO:0018423">
    <property type="term" value="F:protein C-terminal leucine carboxyl O-methyltransferase activity"/>
    <property type="evidence" value="ECO:0000318"/>
    <property type="project" value="GO_Central"/>
</dbReference>
<dbReference type="GO" id="GO:0032259">
    <property type="term" value="P:methylation"/>
    <property type="evidence" value="ECO:0007669"/>
    <property type="project" value="UniProtKB-KW"/>
</dbReference>
<dbReference type="Gene3D" id="3.40.50.150">
    <property type="entry name" value="Vaccinia Virus protein VP39"/>
    <property type="match status" value="1"/>
</dbReference>
<dbReference type="InterPro" id="IPR016651">
    <property type="entry name" value="LCMT1"/>
</dbReference>
<dbReference type="InterPro" id="IPR007213">
    <property type="entry name" value="Ppm1/Ppm2/Tcmp"/>
</dbReference>
<dbReference type="InterPro" id="IPR029063">
    <property type="entry name" value="SAM-dependent_MTases_sf"/>
</dbReference>
<dbReference type="PANTHER" id="PTHR13600">
    <property type="entry name" value="LEUCINE CARBOXYL METHYLTRANSFERASE"/>
    <property type="match status" value="1"/>
</dbReference>
<dbReference type="PANTHER" id="PTHR13600:SF21">
    <property type="entry name" value="LEUCINE CARBOXYL METHYLTRANSFERASE 1"/>
    <property type="match status" value="1"/>
</dbReference>
<dbReference type="Pfam" id="PF04072">
    <property type="entry name" value="LCM"/>
    <property type="match status" value="1"/>
</dbReference>
<dbReference type="PIRSF" id="PIRSF016305">
    <property type="entry name" value="LCM_mtfrase"/>
    <property type="match status" value="1"/>
</dbReference>
<dbReference type="SUPFAM" id="SSF53335">
    <property type="entry name" value="S-adenosyl-L-methionine-dependent methyltransferases"/>
    <property type="match status" value="1"/>
</dbReference>
<name>LCMT1_CANAL</name>
<proteinExistence type="inferred from homology"/>